<feature type="chain" id="PRO_1000149086" description="Histidinol-phosphate aminotransferase">
    <location>
        <begin position="1"/>
        <end position="363"/>
    </location>
</feature>
<feature type="modified residue" description="N6-(pyridoxal phosphate)lysine" evidence="1">
    <location>
        <position position="226"/>
    </location>
</feature>
<gene>
    <name evidence="1" type="primary">hisC</name>
    <name type="ordered locus">Cla_1359</name>
</gene>
<name>HIS8_CAMLR</name>
<comment type="catalytic activity">
    <reaction evidence="1">
        <text>L-histidinol phosphate + 2-oxoglutarate = 3-(imidazol-4-yl)-2-oxopropyl phosphate + L-glutamate</text>
        <dbReference type="Rhea" id="RHEA:23744"/>
        <dbReference type="ChEBI" id="CHEBI:16810"/>
        <dbReference type="ChEBI" id="CHEBI:29985"/>
        <dbReference type="ChEBI" id="CHEBI:57766"/>
        <dbReference type="ChEBI" id="CHEBI:57980"/>
        <dbReference type="EC" id="2.6.1.9"/>
    </reaction>
</comment>
<comment type="cofactor">
    <cofactor evidence="1">
        <name>pyridoxal 5'-phosphate</name>
        <dbReference type="ChEBI" id="CHEBI:597326"/>
    </cofactor>
</comment>
<comment type="pathway">
    <text evidence="1">Amino-acid biosynthesis; L-histidine biosynthesis; L-histidine from 5-phospho-alpha-D-ribose 1-diphosphate: step 7/9.</text>
</comment>
<comment type="subunit">
    <text evidence="1">Homodimer.</text>
</comment>
<comment type="similarity">
    <text evidence="1">Belongs to the class-II pyridoxal-phosphate-dependent aminotransferase family. Histidinol-phosphate aminotransferase subfamily.</text>
</comment>
<proteinExistence type="inferred from homology"/>
<evidence type="ECO:0000255" key="1">
    <source>
        <dbReference type="HAMAP-Rule" id="MF_01023"/>
    </source>
</evidence>
<reference key="1">
    <citation type="journal article" date="2008" name="Foodborne Pathog. Dis.">
        <title>The complete genome sequence and analysis of the human pathogen Campylobacter lari.</title>
        <authorList>
            <person name="Miller W.G."/>
            <person name="Wang G."/>
            <person name="Binnewies T.T."/>
            <person name="Parker C.T."/>
        </authorList>
    </citation>
    <scope>NUCLEOTIDE SEQUENCE [LARGE SCALE GENOMIC DNA]</scope>
    <source>
        <strain>RM2100 / D67 / ATCC BAA-1060</strain>
    </source>
</reference>
<organism>
    <name type="scientific">Campylobacter lari (strain RM2100 / D67 / ATCC BAA-1060)</name>
    <dbReference type="NCBI Taxonomy" id="306263"/>
    <lineage>
        <taxon>Bacteria</taxon>
        <taxon>Pseudomonadati</taxon>
        <taxon>Campylobacterota</taxon>
        <taxon>Epsilonproteobacteria</taxon>
        <taxon>Campylobacterales</taxon>
        <taxon>Campylobacteraceae</taxon>
        <taxon>Campylobacter</taxon>
    </lineage>
</organism>
<protein>
    <recommendedName>
        <fullName evidence="1">Histidinol-phosphate aminotransferase</fullName>
        <ecNumber evidence="1">2.6.1.9</ecNumber>
    </recommendedName>
    <alternativeName>
        <fullName evidence="1">Imidazole acetol-phosphate transaminase</fullName>
    </alternativeName>
</protein>
<accession>B9KDN6</accession>
<sequence>MKFNPFLEAIKTYESGKDMDLVAKEYGLKEVIKLASNENPYGTSKKAKEAIINNAHLAHLYPDDTMSELKQALAQKYDILKENLIIGSGSDQIIEYIVHAKLDHSKAYLQCGVSFAMYEIYAKQLGVKVYKTPSLTHDLNELYELYQKHKNEIKVIFLCLPNNPLGECLDASAVFEFLEKIDEDCLVAIDGAYNEFASFKDSKKHINPKELIHKFQNAVYLGTFSKLYGLGGMRVGYGIACKEIINAFYKLRAPFNVTNLSLKAAVAALDDDEFVQKTLENNFSQMKLYEDFAKNYKIRYIPSYTNFITYFFDEKNSTDLSEKLLKNGIIIRNLQSYGLNAVRISIGTEYENSRFFEEFSKNF</sequence>
<keyword id="KW-0028">Amino-acid biosynthesis</keyword>
<keyword id="KW-0032">Aminotransferase</keyword>
<keyword id="KW-0368">Histidine biosynthesis</keyword>
<keyword id="KW-0663">Pyridoxal phosphate</keyword>
<keyword id="KW-1185">Reference proteome</keyword>
<keyword id="KW-0808">Transferase</keyword>
<dbReference type="EC" id="2.6.1.9" evidence="1"/>
<dbReference type="EMBL" id="CP000932">
    <property type="protein sequence ID" value="ACM64674.1"/>
    <property type="molecule type" value="Genomic_DNA"/>
</dbReference>
<dbReference type="RefSeq" id="WP_012662057.1">
    <property type="nucleotide sequence ID" value="NC_012039.1"/>
</dbReference>
<dbReference type="SMR" id="B9KDN6"/>
<dbReference type="STRING" id="306263.Cla_1359"/>
<dbReference type="KEGG" id="cla:CLA_1359"/>
<dbReference type="PATRIC" id="fig|306263.5.peg.1345"/>
<dbReference type="eggNOG" id="COG0079">
    <property type="taxonomic scope" value="Bacteria"/>
</dbReference>
<dbReference type="HOGENOM" id="CLU_017584_3_3_7"/>
<dbReference type="UniPathway" id="UPA00031">
    <property type="reaction ID" value="UER00012"/>
</dbReference>
<dbReference type="Proteomes" id="UP000007727">
    <property type="component" value="Chromosome"/>
</dbReference>
<dbReference type="GO" id="GO:0004400">
    <property type="term" value="F:histidinol-phosphate transaminase activity"/>
    <property type="evidence" value="ECO:0007669"/>
    <property type="project" value="UniProtKB-UniRule"/>
</dbReference>
<dbReference type="GO" id="GO:0030170">
    <property type="term" value="F:pyridoxal phosphate binding"/>
    <property type="evidence" value="ECO:0007669"/>
    <property type="project" value="InterPro"/>
</dbReference>
<dbReference type="GO" id="GO:0000105">
    <property type="term" value="P:L-histidine biosynthetic process"/>
    <property type="evidence" value="ECO:0007669"/>
    <property type="project" value="UniProtKB-UniRule"/>
</dbReference>
<dbReference type="CDD" id="cd00609">
    <property type="entry name" value="AAT_like"/>
    <property type="match status" value="1"/>
</dbReference>
<dbReference type="Gene3D" id="3.90.1150.10">
    <property type="entry name" value="Aspartate Aminotransferase, domain 1"/>
    <property type="match status" value="1"/>
</dbReference>
<dbReference type="Gene3D" id="3.40.640.10">
    <property type="entry name" value="Type I PLP-dependent aspartate aminotransferase-like (Major domain)"/>
    <property type="match status" value="1"/>
</dbReference>
<dbReference type="HAMAP" id="MF_01023">
    <property type="entry name" value="HisC_aminotrans_2"/>
    <property type="match status" value="1"/>
</dbReference>
<dbReference type="InterPro" id="IPR004839">
    <property type="entry name" value="Aminotransferase_I/II_large"/>
</dbReference>
<dbReference type="InterPro" id="IPR005861">
    <property type="entry name" value="HisP_aminotrans"/>
</dbReference>
<dbReference type="InterPro" id="IPR050106">
    <property type="entry name" value="HistidinolP_aminotransfase"/>
</dbReference>
<dbReference type="InterPro" id="IPR015424">
    <property type="entry name" value="PyrdxlP-dep_Trfase"/>
</dbReference>
<dbReference type="InterPro" id="IPR015421">
    <property type="entry name" value="PyrdxlP-dep_Trfase_major"/>
</dbReference>
<dbReference type="InterPro" id="IPR015422">
    <property type="entry name" value="PyrdxlP-dep_Trfase_small"/>
</dbReference>
<dbReference type="NCBIfam" id="TIGR01141">
    <property type="entry name" value="hisC"/>
    <property type="match status" value="1"/>
</dbReference>
<dbReference type="PANTHER" id="PTHR43643:SF3">
    <property type="entry name" value="HISTIDINOL-PHOSPHATE AMINOTRANSFERASE"/>
    <property type="match status" value="1"/>
</dbReference>
<dbReference type="PANTHER" id="PTHR43643">
    <property type="entry name" value="HISTIDINOL-PHOSPHATE AMINOTRANSFERASE 2"/>
    <property type="match status" value="1"/>
</dbReference>
<dbReference type="Pfam" id="PF00155">
    <property type="entry name" value="Aminotran_1_2"/>
    <property type="match status" value="1"/>
</dbReference>
<dbReference type="SUPFAM" id="SSF53383">
    <property type="entry name" value="PLP-dependent transferases"/>
    <property type="match status" value="1"/>
</dbReference>